<organism>
    <name type="scientific">Methanocaldococcus jannaschii (strain ATCC 43067 / DSM 2661 / JAL-1 / JCM 10045 / NBRC 100440)</name>
    <name type="common">Methanococcus jannaschii</name>
    <dbReference type="NCBI Taxonomy" id="243232"/>
    <lineage>
        <taxon>Archaea</taxon>
        <taxon>Methanobacteriati</taxon>
        <taxon>Methanobacteriota</taxon>
        <taxon>Methanomada group</taxon>
        <taxon>Methanococci</taxon>
        <taxon>Methanococcales</taxon>
        <taxon>Methanocaldococcaceae</taxon>
        <taxon>Methanocaldococcus</taxon>
    </lineage>
</organism>
<protein>
    <recommendedName>
        <fullName evidence="1">UPF0235 protein MJ0618</fullName>
    </recommendedName>
</protein>
<evidence type="ECO:0000255" key="1">
    <source>
        <dbReference type="HAMAP-Rule" id="MF_00634"/>
    </source>
</evidence>
<proteinExistence type="inferred from homology"/>
<comment type="similarity">
    <text evidence="1">Belongs to the UPF0235 family.</text>
</comment>
<sequence length="98" mass="11289">MIEKIIKESREGVLIDIDVQANAKKNEIVGINEWRKRLSIKIKAPATEGKANKEIIKFFKEIFKKDVEIVSGKLNPQKTVLIGDIKKDEVIEILKRYL</sequence>
<accession>Q58035</accession>
<name>Y618_METJA</name>
<feature type="chain" id="PRO_0000139468" description="UPF0235 protein MJ0618">
    <location>
        <begin position="1"/>
        <end position="98"/>
    </location>
</feature>
<gene>
    <name type="ordered locus">MJ0618</name>
</gene>
<keyword id="KW-1185">Reference proteome</keyword>
<reference key="1">
    <citation type="journal article" date="1996" name="Science">
        <title>Complete genome sequence of the methanogenic archaeon, Methanococcus jannaschii.</title>
        <authorList>
            <person name="Bult C.J."/>
            <person name="White O."/>
            <person name="Olsen G.J."/>
            <person name="Zhou L."/>
            <person name="Fleischmann R.D."/>
            <person name="Sutton G.G."/>
            <person name="Blake J.A."/>
            <person name="FitzGerald L.M."/>
            <person name="Clayton R.A."/>
            <person name="Gocayne J.D."/>
            <person name="Kerlavage A.R."/>
            <person name="Dougherty B.A."/>
            <person name="Tomb J.-F."/>
            <person name="Adams M.D."/>
            <person name="Reich C.I."/>
            <person name="Overbeek R."/>
            <person name="Kirkness E.F."/>
            <person name="Weinstock K.G."/>
            <person name="Merrick J.M."/>
            <person name="Glodek A."/>
            <person name="Scott J.L."/>
            <person name="Geoghagen N.S.M."/>
            <person name="Weidman J.F."/>
            <person name="Fuhrmann J.L."/>
            <person name="Nguyen D."/>
            <person name="Utterback T.R."/>
            <person name="Kelley J.M."/>
            <person name="Peterson J.D."/>
            <person name="Sadow P.W."/>
            <person name="Hanna M.C."/>
            <person name="Cotton M.D."/>
            <person name="Roberts K.M."/>
            <person name="Hurst M.A."/>
            <person name="Kaine B.P."/>
            <person name="Borodovsky M."/>
            <person name="Klenk H.-P."/>
            <person name="Fraser C.M."/>
            <person name="Smith H.O."/>
            <person name="Woese C.R."/>
            <person name="Venter J.C."/>
        </authorList>
    </citation>
    <scope>NUCLEOTIDE SEQUENCE [LARGE SCALE GENOMIC DNA]</scope>
    <source>
        <strain>ATCC 43067 / DSM 2661 / JAL-1 / JCM 10045 / NBRC 100440</strain>
    </source>
</reference>
<dbReference type="EMBL" id="L77117">
    <property type="protein sequence ID" value="AAB98613.1"/>
    <property type="molecule type" value="Genomic_DNA"/>
</dbReference>
<dbReference type="PIR" id="B64377">
    <property type="entry name" value="B64377"/>
</dbReference>
<dbReference type="RefSeq" id="WP_010870123.1">
    <property type="nucleotide sequence ID" value="NC_000909.1"/>
</dbReference>
<dbReference type="SMR" id="Q58035"/>
<dbReference type="FunCoup" id="Q58035">
    <property type="interactions" value="4"/>
</dbReference>
<dbReference type="STRING" id="243232.MJ_0618"/>
<dbReference type="PaxDb" id="243232-MJ_0618"/>
<dbReference type="EnsemblBacteria" id="AAB98613">
    <property type="protein sequence ID" value="AAB98613"/>
    <property type="gene ID" value="MJ_0618"/>
</dbReference>
<dbReference type="GeneID" id="1451484"/>
<dbReference type="KEGG" id="mja:MJ_0618"/>
<dbReference type="eggNOG" id="arCOG04058">
    <property type="taxonomic scope" value="Archaea"/>
</dbReference>
<dbReference type="HOGENOM" id="CLU_130694_6_1_2"/>
<dbReference type="InParanoid" id="Q58035"/>
<dbReference type="OrthoDB" id="53248at2157"/>
<dbReference type="PhylomeDB" id="Q58035"/>
<dbReference type="Proteomes" id="UP000000805">
    <property type="component" value="Chromosome"/>
</dbReference>
<dbReference type="GO" id="GO:0005737">
    <property type="term" value="C:cytoplasm"/>
    <property type="evidence" value="ECO:0000318"/>
    <property type="project" value="GO_Central"/>
</dbReference>
<dbReference type="Gene3D" id="3.30.1200.10">
    <property type="entry name" value="YggU-like"/>
    <property type="match status" value="1"/>
</dbReference>
<dbReference type="HAMAP" id="MF_00634">
    <property type="entry name" value="UPF0235"/>
    <property type="match status" value="1"/>
</dbReference>
<dbReference type="InterPro" id="IPR003746">
    <property type="entry name" value="DUF167"/>
</dbReference>
<dbReference type="InterPro" id="IPR036591">
    <property type="entry name" value="YggU-like_sf"/>
</dbReference>
<dbReference type="NCBIfam" id="TIGR00251">
    <property type="entry name" value="DUF167 family protein"/>
    <property type="match status" value="1"/>
</dbReference>
<dbReference type="PANTHER" id="PTHR13420">
    <property type="entry name" value="UPF0235 PROTEIN C15ORF40"/>
    <property type="match status" value="1"/>
</dbReference>
<dbReference type="PANTHER" id="PTHR13420:SF7">
    <property type="entry name" value="UPF0235 PROTEIN C15ORF40"/>
    <property type="match status" value="1"/>
</dbReference>
<dbReference type="Pfam" id="PF02594">
    <property type="entry name" value="DUF167"/>
    <property type="match status" value="1"/>
</dbReference>
<dbReference type="SMART" id="SM01152">
    <property type="entry name" value="DUF167"/>
    <property type="match status" value="1"/>
</dbReference>
<dbReference type="SUPFAM" id="SSF69786">
    <property type="entry name" value="YggU-like"/>
    <property type="match status" value="1"/>
</dbReference>